<comment type="function">
    <text evidence="1">Component of the MCM8-MCM9 complex, a complex involved in homologous recombination repair following DNA interstrand cross-links and plays a key role during gametogenesis. The MCM8-MCM9 complex probably acts as a hexameric helicase required to process aberrant forks into homologous recombination substrates and to orchestrate homologous recombination with resection, fork stabilization and fork restart (By similarity).</text>
</comment>
<comment type="catalytic activity">
    <reaction>
        <text>ATP + H2O = ADP + phosphate + H(+)</text>
        <dbReference type="Rhea" id="RHEA:13065"/>
        <dbReference type="ChEBI" id="CHEBI:15377"/>
        <dbReference type="ChEBI" id="CHEBI:15378"/>
        <dbReference type="ChEBI" id="CHEBI:30616"/>
        <dbReference type="ChEBI" id="CHEBI:43474"/>
        <dbReference type="ChEBI" id="CHEBI:456216"/>
        <dbReference type="EC" id="3.6.4.12"/>
    </reaction>
</comment>
<comment type="subunit">
    <text evidence="1">Component of the MCM8-MCM9 complex, which forms a hexamer composed of mcm8 and mcm9.</text>
</comment>
<comment type="subcellular location">
    <subcellularLocation>
        <location evidence="1">Nucleus</location>
    </subcellularLocation>
    <text evidence="1">Localizes to nuclear foci and colocalizes with rad51.</text>
</comment>
<comment type="similarity">
    <text evidence="4">Belongs to the MCM family.</text>
</comment>
<accession>F1QDI9</accession>
<proteinExistence type="inferred from homology"/>
<sequence length="1133" mass="125662">MMLSPDQVSLIGLVFETYVMEHHKSDIQQILQENTEDLHYPVVVNAMTLFEDNMEVGECFNAFPSKVLPIFDNALQRAAQAISQSSSSSPQDTFRLKHNMHVRISGLPVCPELTRDHIPKARDVGHFLSVTGTVIRTSVTKVLEYERDYMCNKCRHVFSVQASFEQFYTFTPPTSCPSEEGCGSFKFTCLSGSDAPPAACKDYQEIKIQEQVQKLSVGSIPRSMLIILEDDLVDSCKSGDDITVYGVVCQRWKPMFQDCRCDVEIVLKANYIEVNNEQSTTALVLEDIQKEFEEFWDSHKHDPIAGRNEILMSLCPQVFGMYVVKLAVAMVLAGGVQRIDASGTKVRGESHLLLVGDPGTGKSQFLKYAAKITPRSVLTAGIGSTNAGLTVAAVKDSGEWHLEAGALVLSDGGLCCIDEFNSIKEHDRTSIHEAMEQQTISVAKAGMVCKLDTRTTILAATNPKGQYDPNVSVSVNVALASPLLSRFDLVLVLLDTKNPDWDKIISSFILQNKGAPSESLCLWSMEKMRAYFCLIKTLKPRITPEANTILSRYYQLQRQSDSRNAARTTIRMLESLSRLAEAHARLMFRETVTVEDAVVVVSVMECSMQGGALLGNVNALHTSFPDEPCEQYKTQCEIVLERLGLSDLLQRELQRLSGLQNGRPGSPKSPQSHSEHRNENTTSTNHSNQELGLNWFHSLSSSSNITSNNPPTPVITSTQNATTPPDMTSRNQQQQASVWAKSADVSVEEAVQETVSKKLRGKRLKEMKETLLLSKDDDLEDIFSHSTPMKNSKRKNMADTYQESGEDLHDKFTNFTFKPREKMSHANASTSTSAPEKQKRKIETDSHPPAEGGRANKTLRMETHSKNKTCIESEKDAIIPEAPKKQGVKKNNSSLRPPAEGSRAYKILRMETQNTNLTPIESVRDSMKPEAPKKQDVKKNESILCPPAEGSRADKTLRMEMYNTPKDVSSQLLNDDSSAQKQMFEDKEHPQQLLSRLNALSPGENDDGSNKKPLKTDHPKAKVASSTLAKLSRFSFTGSSEEQAGHKTVQTPPVAANGGVNVVATGSEKQENMTNMSMRREISDRQEDDGETAGRKRRCFELGSGGSAGLIKGFSLFSSSVLDDEDFDDVWNW</sequence>
<keyword id="KW-0067">ATP-binding</keyword>
<keyword id="KW-0227">DNA damage</keyword>
<keyword id="KW-0234">DNA repair</keyword>
<keyword id="KW-0238">DNA-binding</keyword>
<keyword id="KW-0347">Helicase</keyword>
<keyword id="KW-0378">Hydrolase</keyword>
<keyword id="KW-0547">Nucleotide-binding</keyword>
<keyword id="KW-0539">Nucleus</keyword>
<keyword id="KW-1185">Reference proteome</keyword>
<feature type="chain" id="PRO_0000419478" description="DNA helicase MCM9">
    <location>
        <begin position="1"/>
        <end position="1133"/>
    </location>
</feature>
<feature type="domain" description="MCM">
    <location>
        <begin position="304"/>
        <end position="509"/>
    </location>
</feature>
<feature type="region of interest" description="Disordered" evidence="3">
    <location>
        <begin position="656"/>
        <end position="688"/>
    </location>
</feature>
<feature type="region of interest" description="Disordered" evidence="3">
    <location>
        <begin position="702"/>
        <end position="737"/>
    </location>
</feature>
<feature type="region of interest" description="Disordered" evidence="3">
    <location>
        <begin position="818"/>
        <end position="857"/>
    </location>
</feature>
<feature type="region of interest" description="Disordered" evidence="3">
    <location>
        <begin position="878"/>
        <end position="901"/>
    </location>
</feature>
<feature type="region of interest" description="Disordered" evidence="3">
    <location>
        <begin position="922"/>
        <end position="954"/>
    </location>
</feature>
<feature type="region of interest" description="Disordered" evidence="3">
    <location>
        <begin position="999"/>
        <end position="1059"/>
    </location>
</feature>
<feature type="compositionally biased region" description="Low complexity" evidence="3">
    <location>
        <begin position="702"/>
        <end position="718"/>
    </location>
</feature>
<feature type="compositionally biased region" description="Polar residues" evidence="3">
    <location>
        <begin position="719"/>
        <end position="737"/>
    </location>
</feature>
<feature type="compositionally biased region" description="Polar residues" evidence="3">
    <location>
        <begin position="826"/>
        <end position="835"/>
    </location>
</feature>
<feature type="compositionally biased region" description="Basic and acidic residues" evidence="3">
    <location>
        <begin position="922"/>
        <end position="941"/>
    </location>
</feature>
<feature type="compositionally biased region" description="Basic and acidic residues" evidence="3">
    <location>
        <begin position="1008"/>
        <end position="1020"/>
    </location>
</feature>
<feature type="compositionally biased region" description="Polar residues" evidence="3">
    <location>
        <begin position="1024"/>
        <end position="1042"/>
    </location>
</feature>
<feature type="binding site" evidence="2">
    <location>
        <begin position="356"/>
        <end position="363"/>
    </location>
    <ligand>
        <name>ATP</name>
        <dbReference type="ChEBI" id="CHEBI:30616"/>
    </ligand>
</feature>
<gene>
    <name type="primary">mcm9</name>
</gene>
<reference key="1">
    <citation type="journal article" date="2013" name="Nature">
        <title>The zebrafish reference genome sequence and its relationship to the human genome.</title>
        <authorList>
            <person name="Howe K."/>
            <person name="Clark M.D."/>
            <person name="Torroja C.F."/>
            <person name="Torrance J."/>
            <person name="Berthelot C."/>
            <person name="Muffato M."/>
            <person name="Collins J.E."/>
            <person name="Humphray S."/>
            <person name="McLaren K."/>
            <person name="Matthews L."/>
            <person name="McLaren S."/>
            <person name="Sealy I."/>
            <person name="Caccamo M."/>
            <person name="Churcher C."/>
            <person name="Scott C."/>
            <person name="Barrett J.C."/>
            <person name="Koch R."/>
            <person name="Rauch G.J."/>
            <person name="White S."/>
            <person name="Chow W."/>
            <person name="Kilian B."/>
            <person name="Quintais L.T."/>
            <person name="Guerra-Assuncao J.A."/>
            <person name="Zhou Y."/>
            <person name="Gu Y."/>
            <person name="Yen J."/>
            <person name="Vogel J.H."/>
            <person name="Eyre T."/>
            <person name="Redmond S."/>
            <person name="Banerjee R."/>
            <person name="Chi J."/>
            <person name="Fu B."/>
            <person name="Langley E."/>
            <person name="Maguire S.F."/>
            <person name="Laird G.K."/>
            <person name="Lloyd D."/>
            <person name="Kenyon E."/>
            <person name="Donaldson S."/>
            <person name="Sehra H."/>
            <person name="Almeida-King J."/>
            <person name="Loveland J."/>
            <person name="Trevanion S."/>
            <person name="Jones M."/>
            <person name="Quail M."/>
            <person name="Willey D."/>
            <person name="Hunt A."/>
            <person name="Burton J."/>
            <person name="Sims S."/>
            <person name="McLay K."/>
            <person name="Plumb B."/>
            <person name="Davis J."/>
            <person name="Clee C."/>
            <person name="Oliver K."/>
            <person name="Clark R."/>
            <person name="Riddle C."/>
            <person name="Elliot D."/>
            <person name="Threadgold G."/>
            <person name="Harden G."/>
            <person name="Ware D."/>
            <person name="Begum S."/>
            <person name="Mortimore B."/>
            <person name="Kerry G."/>
            <person name="Heath P."/>
            <person name="Phillimore B."/>
            <person name="Tracey A."/>
            <person name="Corby N."/>
            <person name="Dunn M."/>
            <person name="Johnson C."/>
            <person name="Wood J."/>
            <person name="Clark S."/>
            <person name="Pelan S."/>
            <person name="Griffiths G."/>
            <person name="Smith M."/>
            <person name="Glithero R."/>
            <person name="Howden P."/>
            <person name="Barker N."/>
            <person name="Lloyd C."/>
            <person name="Stevens C."/>
            <person name="Harley J."/>
            <person name="Holt K."/>
            <person name="Panagiotidis G."/>
            <person name="Lovell J."/>
            <person name="Beasley H."/>
            <person name="Henderson C."/>
            <person name="Gordon D."/>
            <person name="Auger K."/>
            <person name="Wright D."/>
            <person name="Collins J."/>
            <person name="Raisen C."/>
            <person name="Dyer L."/>
            <person name="Leung K."/>
            <person name="Robertson L."/>
            <person name="Ambridge K."/>
            <person name="Leongamornlert D."/>
            <person name="McGuire S."/>
            <person name="Gilderthorp R."/>
            <person name="Griffiths C."/>
            <person name="Manthravadi D."/>
            <person name="Nichol S."/>
            <person name="Barker G."/>
            <person name="Whitehead S."/>
            <person name="Kay M."/>
            <person name="Brown J."/>
            <person name="Murnane C."/>
            <person name="Gray E."/>
            <person name="Humphries M."/>
            <person name="Sycamore N."/>
            <person name="Barker D."/>
            <person name="Saunders D."/>
            <person name="Wallis J."/>
            <person name="Babbage A."/>
            <person name="Hammond S."/>
            <person name="Mashreghi-Mohammadi M."/>
            <person name="Barr L."/>
            <person name="Martin S."/>
            <person name="Wray P."/>
            <person name="Ellington A."/>
            <person name="Matthews N."/>
            <person name="Ellwood M."/>
            <person name="Woodmansey R."/>
            <person name="Clark G."/>
            <person name="Cooper J."/>
            <person name="Tromans A."/>
            <person name="Grafham D."/>
            <person name="Skuce C."/>
            <person name="Pandian R."/>
            <person name="Andrews R."/>
            <person name="Harrison E."/>
            <person name="Kimberley A."/>
            <person name="Garnett J."/>
            <person name="Fosker N."/>
            <person name="Hall R."/>
            <person name="Garner P."/>
            <person name="Kelly D."/>
            <person name="Bird C."/>
            <person name="Palmer S."/>
            <person name="Gehring I."/>
            <person name="Berger A."/>
            <person name="Dooley C.M."/>
            <person name="Ersan-Urun Z."/>
            <person name="Eser C."/>
            <person name="Geiger H."/>
            <person name="Geisler M."/>
            <person name="Karotki L."/>
            <person name="Kirn A."/>
            <person name="Konantz J."/>
            <person name="Konantz M."/>
            <person name="Oberlander M."/>
            <person name="Rudolph-Geiger S."/>
            <person name="Teucke M."/>
            <person name="Lanz C."/>
            <person name="Raddatz G."/>
            <person name="Osoegawa K."/>
            <person name="Zhu B."/>
            <person name="Rapp A."/>
            <person name="Widaa S."/>
            <person name="Langford C."/>
            <person name="Yang F."/>
            <person name="Schuster S.C."/>
            <person name="Carter N.P."/>
            <person name="Harrow J."/>
            <person name="Ning Z."/>
            <person name="Herrero J."/>
            <person name="Searle S.M."/>
            <person name="Enright A."/>
            <person name="Geisler R."/>
            <person name="Plasterk R.H."/>
            <person name="Lee C."/>
            <person name="Westerfield M."/>
            <person name="de Jong P.J."/>
            <person name="Zon L.I."/>
            <person name="Postlethwait J.H."/>
            <person name="Nusslein-Volhard C."/>
            <person name="Hubbard T.J."/>
            <person name="Roest Crollius H."/>
            <person name="Rogers J."/>
            <person name="Stemple D.L."/>
        </authorList>
    </citation>
    <scope>NUCLEOTIDE SEQUENCE [LARGE SCALE GENOMIC DNA]</scope>
    <source>
        <strain>Tuebingen</strain>
    </source>
</reference>
<dbReference type="EC" id="3.6.4.12"/>
<dbReference type="EMBL" id="AL845301">
    <property type="status" value="NOT_ANNOTATED_CDS"/>
    <property type="molecule type" value="Genomic_DNA"/>
</dbReference>
<dbReference type="SMR" id="F1QDI9"/>
<dbReference type="FunCoup" id="F1QDI9">
    <property type="interactions" value="768"/>
</dbReference>
<dbReference type="STRING" id="7955.ENSDARP00000115879"/>
<dbReference type="PaxDb" id="7955-ENSDARP00000115879"/>
<dbReference type="eggNOG" id="KOG0477">
    <property type="taxonomic scope" value="Eukaryota"/>
</dbReference>
<dbReference type="InParanoid" id="F1QDI9"/>
<dbReference type="PRO" id="PR:F1QDI9"/>
<dbReference type="Proteomes" id="UP000000437">
    <property type="component" value="Unplaced"/>
</dbReference>
<dbReference type="GO" id="GO:0097362">
    <property type="term" value="C:MCM8-MCM9 complex"/>
    <property type="evidence" value="ECO:0000250"/>
    <property type="project" value="UniProtKB"/>
</dbReference>
<dbReference type="GO" id="GO:0005634">
    <property type="term" value="C:nucleus"/>
    <property type="evidence" value="ECO:0007669"/>
    <property type="project" value="UniProtKB-SubCell"/>
</dbReference>
<dbReference type="GO" id="GO:0005524">
    <property type="term" value="F:ATP binding"/>
    <property type="evidence" value="ECO:0007669"/>
    <property type="project" value="UniProtKB-KW"/>
</dbReference>
<dbReference type="GO" id="GO:0016887">
    <property type="term" value="F:ATP hydrolysis activity"/>
    <property type="evidence" value="ECO:0007669"/>
    <property type="project" value="InterPro"/>
</dbReference>
<dbReference type="GO" id="GO:0003677">
    <property type="term" value="F:DNA binding"/>
    <property type="evidence" value="ECO:0007669"/>
    <property type="project" value="UniProtKB-KW"/>
</dbReference>
<dbReference type="GO" id="GO:0004386">
    <property type="term" value="F:helicase activity"/>
    <property type="evidence" value="ECO:0007669"/>
    <property type="project" value="UniProtKB-KW"/>
</dbReference>
<dbReference type="GO" id="GO:0006974">
    <property type="term" value="P:DNA damage response"/>
    <property type="evidence" value="ECO:0000250"/>
    <property type="project" value="UniProtKB"/>
</dbReference>
<dbReference type="GO" id="GO:0000724">
    <property type="term" value="P:double-strand break repair via homologous recombination"/>
    <property type="evidence" value="ECO:0000250"/>
    <property type="project" value="UniProtKB"/>
</dbReference>
<dbReference type="CDD" id="cd17760">
    <property type="entry name" value="MCM9"/>
    <property type="match status" value="1"/>
</dbReference>
<dbReference type="FunFam" id="3.40.50.300:FF:000671">
    <property type="entry name" value="DNA helicase MCM9 isoform X1"/>
    <property type="match status" value="1"/>
</dbReference>
<dbReference type="FunFam" id="2.40.50.140:FF:000120">
    <property type="entry name" value="Probable DNA helicase MCM9"/>
    <property type="match status" value="1"/>
</dbReference>
<dbReference type="Gene3D" id="2.40.50.140">
    <property type="entry name" value="Nucleic acid-binding proteins"/>
    <property type="match status" value="1"/>
</dbReference>
<dbReference type="Gene3D" id="3.40.50.300">
    <property type="entry name" value="P-loop containing nucleotide triphosphate hydrolases"/>
    <property type="match status" value="1"/>
</dbReference>
<dbReference type="InterPro" id="IPR003593">
    <property type="entry name" value="AAA+_ATPase"/>
</dbReference>
<dbReference type="InterPro" id="IPR031327">
    <property type="entry name" value="MCM"/>
</dbReference>
<dbReference type="InterPro" id="IPR001208">
    <property type="entry name" value="MCM_dom"/>
</dbReference>
<dbReference type="InterPro" id="IPR041562">
    <property type="entry name" value="MCM_lid"/>
</dbReference>
<dbReference type="InterPro" id="IPR033762">
    <property type="entry name" value="MCM_OB"/>
</dbReference>
<dbReference type="InterPro" id="IPR012340">
    <property type="entry name" value="NA-bd_OB-fold"/>
</dbReference>
<dbReference type="InterPro" id="IPR027417">
    <property type="entry name" value="P-loop_NTPase"/>
</dbReference>
<dbReference type="PANTHER" id="PTHR11630:SF48">
    <property type="entry name" value="DNA HELICASE MCM9"/>
    <property type="match status" value="1"/>
</dbReference>
<dbReference type="PANTHER" id="PTHR11630">
    <property type="entry name" value="DNA REPLICATION LICENSING FACTOR MCM FAMILY MEMBER"/>
    <property type="match status" value="1"/>
</dbReference>
<dbReference type="Pfam" id="PF00493">
    <property type="entry name" value="MCM"/>
    <property type="match status" value="1"/>
</dbReference>
<dbReference type="Pfam" id="PF17855">
    <property type="entry name" value="MCM_lid"/>
    <property type="match status" value="1"/>
</dbReference>
<dbReference type="Pfam" id="PF17207">
    <property type="entry name" value="MCM_OB"/>
    <property type="match status" value="1"/>
</dbReference>
<dbReference type="PRINTS" id="PR01657">
    <property type="entry name" value="MCMFAMILY"/>
</dbReference>
<dbReference type="SMART" id="SM00382">
    <property type="entry name" value="AAA"/>
    <property type="match status" value="1"/>
</dbReference>
<dbReference type="SMART" id="SM00350">
    <property type="entry name" value="MCM"/>
    <property type="match status" value="1"/>
</dbReference>
<dbReference type="SUPFAM" id="SSF50249">
    <property type="entry name" value="Nucleic acid-binding proteins"/>
    <property type="match status" value="1"/>
</dbReference>
<dbReference type="SUPFAM" id="SSF52540">
    <property type="entry name" value="P-loop containing nucleoside triphosphate hydrolases"/>
    <property type="match status" value="1"/>
</dbReference>
<dbReference type="PROSITE" id="PS50051">
    <property type="entry name" value="MCM_2"/>
    <property type="match status" value="1"/>
</dbReference>
<name>MCM9_DANRE</name>
<evidence type="ECO:0000250" key="1"/>
<evidence type="ECO:0000255" key="2"/>
<evidence type="ECO:0000256" key="3">
    <source>
        <dbReference type="SAM" id="MobiDB-lite"/>
    </source>
</evidence>
<evidence type="ECO:0000305" key="4"/>
<organism>
    <name type="scientific">Danio rerio</name>
    <name type="common">Zebrafish</name>
    <name type="synonym">Brachydanio rerio</name>
    <dbReference type="NCBI Taxonomy" id="7955"/>
    <lineage>
        <taxon>Eukaryota</taxon>
        <taxon>Metazoa</taxon>
        <taxon>Chordata</taxon>
        <taxon>Craniata</taxon>
        <taxon>Vertebrata</taxon>
        <taxon>Euteleostomi</taxon>
        <taxon>Actinopterygii</taxon>
        <taxon>Neopterygii</taxon>
        <taxon>Teleostei</taxon>
        <taxon>Ostariophysi</taxon>
        <taxon>Cypriniformes</taxon>
        <taxon>Danionidae</taxon>
        <taxon>Danioninae</taxon>
        <taxon>Danio</taxon>
    </lineage>
</organism>
<protein>
    <recommendedName>
        <fullName>DNA helicase MCM9</fullName>
        <ecNumber>3.6.4.12</ecNumber>
    </recommendedName>
    <alternativeName>
        <fullName>Minichromosome maintenance 9</fullName>
    </alternativeName>
</protein>